<keyword id="KW-0456">Lyase</keyword>
<keyword id="KW-0658">Purine biosynthesis</keyword>
<keyword id="KW-1185">Reference proteome</keyword>
<reference key="1">
    <citation type="journal article" date="1998" name="Nature">
        <title>The complete genome of the hyperthermophilic bacterium Aquifex aeolicus.</title>
        <authorList>
            <person name="Deckert G."/>
            <person name="Warren P.V."/>
            <person name="Gaasterland T."/>
            <person name="Young W.G."/>
            <person name="Lenox A.L."/>
            <person name="Graham D.E."/>
            <person name="Overbeek R."/>
            <person name="Snead M.A."/>
            <person name="Keller M."/>
            <person name="Aujay M."/>
            <person name="Huber R."/>
            <person name="Feldman R.A."/>
            <person name="Short J.M."/>
            <person name="Olsen G.J."/>
            <person name="Swanson R.V."/>
        </authorList>
    </citation>
    <scope>NUCLEOTIDE SEQUENCE [LARGE SCALE GENOMIC DNA]</scope>
    <source>
        <strain>VF5</strain>
    </source>
</reference>
<gene>
    <name type="primary">purB</name>
    <name type="ordered locus">aq_597</name>
</gene>
<proteinExistence type="inferred from homology"/>
<accession>O66856</accession>
<dbReference type="EC" id="4.3.2.2" evidence="2"/>
<dbReference type="EMBL" id="AE000657">
    <property type="protein sequence ID" value="AAC06813.1"/>
    <property type="molecule type" value="Genomic_DNA"/>
</dbReference>
<dbReference type="PIR" id="D70353">
    <property type="entry name" value="D70353"/>
</dbReference>
<dbReference type="RefSeq" id="NP_213416.1">
    <property type="nucleotide sequence ID" value="NC_000918.1"/>
</dbReference>
<dbReference type="RefSeq" id="WP_010880354.1">
    <property type="nucleotide sequence ID" value="NC_000918.1"/>
</dbReference>
<dbReference type="SMR" id="O66856"/>
<dbReference type="FunCoup" id="O66856">
    <property type="interactions" value="467"/>
</dbReference>
<dbReference type="STRING" id="224324.aq_597"/>
<dbReference type="EnsemblBacteria" id="AAC06813">
    <property type="protein sequence ID" value="AAC06813"/>
    <property type="gene ID" value="aq_597"/>
</dbReference>
<dbReference type="KEGG" id="aae:aq_597"/>
<dbReference type="PATRIC" id="fig|224324.8.peg.485"/>
<dbReference type="eggNOG" id="COG0015">
    <property type="taxonomic scope" value="Bacteria"/>
</dbReference>
<dbReference type="HOGENOM" id="CLU_030949_0_1_0"/>
<dbReference type="InParanoid" id="O66856"/>
<dbReference type="OrthoDB" id="9768878at2"/>
<dbReference type="UniPathway" id="UPA00074">
    <property type="reaction ID" value="UER00132"/>
</dbReference>
<dbReference type="UniPathway" id="UPA00075">
    <property type="reaction ID" value="UER00336"/>
</dbReference>
<dbReference type="Proteomes" id="UP000000798">
    <property type="component" value="Chromosome"/>
</dbReference>
<dbReference type="GO" id="GO:0005829">
    <property type="term" value="C:cytosol"/>
    <property type="evidence" value="ECO:0000318"/>
    <property type="project" value="GO_Central"/>
</dbReference>
<dbReference type="GO" id="GO:0070626">
    <property type="term" value="F:(S)-2-(5-amino-1-(5-phospho-D-ribosyl)imidazole-4-carboxamido) succinate lyase (fumarate-forming) activity"/>
    <property type="evidence" value="ECO:0000318"/>
    <property type="project" value="GO_Central"/>
</dbReference>
<dbReference type="GO" id="GO:0004018">
    <property type="term" value="F:N6-(1,2-dicarboxyethyl)AMP AMP-lyase (fumarate-forming) activity"/>
    <property type="evidence" value="ECO:0000318"/>
    <property type="project" value="GO_Central"/>
</dbReference>
<dbReference type="GO" id="GO:0044208">
    <property type="term" value="P:'de novo' AMP biosynthetic process"/>
    <property type="evidence" value="ECO:0000318"/>
    <property type="project" value="GO_Central"/>
</dbReference>
<dbReference type="GO" id="GO:0006189">
    <property type="term" value="P:'de novo' IMP biosynthetic process"/>
    <property type="evidence" value="ECO:0007669"/>
    <property type="project" value="UniProtKB-UniPathway"/>
</dbReference>
<dbReference type="CDD" id="cd01360">
    <property type="entry name" value="Adenylsuccinate_lyase_1"/>
    <property type="match status" value="1"/>
</dbReference>
<dbReference type="FunFam" id="1.10.40.30:FF:000007">
    <property type="entry name" value="Adenylosuccinate lyase"/>
    <property type="match status" value="1"/>
</dbReference>
<dbReference type="FunFam" id="1.20.200.10:FF:000008">
    <property type="entry name" value="Adenylosuccinate lyase"/>
    <property type="match status" value="1"/>
</dbReference>
<dbReference type="Gene3D" id="1.10.40.30">
    <property type="entry name" value="Fumarase/aspartase (C-terminal domain)"/>
    <property type="match status" value="1"/>
</dbReference>
<dbReference type="Gene3D" id="1.20.200.10">
    <property type="entry name" value="Fumarase/aspartase (Central domain)"/>
    <property type="match status" value="1"/>
</dbReference>
<dbReference type="Gene3D" id="1.10.275.10">
    <property type="entry name" value="Fumarase/aspartase (N-terminal domain)"/>
    <property type="match status" value="1"/>
</dbReference>
<dbReference type="InterPro" id="IPR019468">
    <property type="entry name" value="AdenyloSucc_lyase_C"/>
</dbReference>
<dbReference type="InterPro" id="IPR024083">
    <property type="entry name" value="Fumarase/histidase_N"/>
</dbReference>
<dbReference type="InterPro" id="IPR020557">
    <property type="entry name" value="Fumarate_lyase_CS"/>
</dbReference>
<dbReference type="InterPro" id="IPR000362">
    <property type="entry name" value="Fumarate_lyase_fam"/>
</dbReference>
<dbReference type="InterPro" id="IPR022761">
    <property type="entry name" value="Fumarate_lyase_N"/>
</dbReference>
<dbReference type="InterPro" id="IPR008948">
    <property type="entry name" value="L-Aspartase-like"/>
</dbReference>
<dbReference type="InterPro" id="IPR004769">
    <property type="entry name" value="Pur_lyase"/>
</dbReference>
<dbReference type="NCBIfam" id="TIGR00928">
    <property type="entry name" value="purB"/>
    <property type="match status" value="1"/>
</dbReference>
<dbReference type="PANTHER" id="PTHR43172">
    <property type="entry name" value="ADENYLOSUCCINATE LYASE"/>
    <property type="match status" value="1"/>
</dbReference>
<dbReference type="PANTHER" id="PTHR43172:SF1">
    <property type="entry name" value="ADENYLOSUCCINATE LYASE"/>
    <property type="match status" value="1"/>
</dbReference>
<dbReference type="Pfam" id="PF10397">
    <property type="entry name" value="ADSL_C"/>
    <property type="match status" value="1"/>
</dbReference>
<dbReference type="Pfam" id="PF00206">
    <property type="entry name" value="Lyase_1"/>
    <property type="match status" value="1"/>
</dbReference>
<dbReference type="PRINTS" id="PR00145">
    <property type="entry name" value="ARGSUCLYASE"/>
</dbReference>
<dbReference type="PRINTS" id="PR00149">
    <property type="entry name" value="FUMRATELYASE"/>
</dbReference>
<dbReference type="SMART" id="SM00998">
    <property type="entry name" value="ADSL_C"/>
    <property type="match status" value="1"/>
</dbReference>
<dbReference type="SUPFAM" id="SSF48557">
    <property type="entry name" value="L-aspartase-like"/>
    <property type="match status" value="1"/>
</dbReference>
<dbReference type="PROSITE" id="PS00163">
    <property type="entry name" value="FUMARATE_LYASES"/>
    <property type="match status" value="1"/>
</dbReference>
<comment type="function">
    <text evidence="2">Catalyzes two reactions in de novo purine nucleotide biosynthesis. Catalyzes the breakdown of 5-aminoimidazole- (N-succinylocarboxamide) ribotide (SAICAR or 2-[5-amino-1-(5-phospho-beta-D-ribosyl)imidazole-4-carboxamido]succinate) to 5-aminoimidazole-4-carboxamide ribotide (AICAR or 5-amino-1-(5-phospho-beta-D-ribosyl)imidazole-4-carboxamide) and fumarate, and of adenylosuccinate (ADS or N(6)-(1,2-dicarboxyethyl)-AMP) to adenosine monophosphate (AMP) and fumarate.</text>
</comment>
<comment type="catalytic activity">
    <reaction evidence="2">
        <text>N(6)-(1,2-dicarboxyethyl)-AMP = fumarate + AMP</text>
        <dbReference type="Rhea" id="RHEA:16853"/>
        <dbReference type="ChEBI" id="CHEBI:29806"/>
        <dbReference type="ChEBI" id="CHEBI:57567"/>
        <dbReference type="ChEBI" id="CHEBI:456215"/>
        <dbReference type="EC" id="4.3.2.2"/>
    </reaction>
    <physiologicalReaction direction="left-to-right" evidence="2">
        <dbReference type="Rhea" id="RHEA:16854"/>
    </physiologicalReaction>
</comment>
<comment type="catalytic activity">
    <reaction evidence="2">
        <text>(2S)-2-[5-amino-1-(5-phospho-beta-D-ribosyl)imidazole-4-carboxamido]succinate = 5-amino-1-(5-phospho-beta-D-ribosyl)imidazole-4-carboxamide + fumarate</text>
        <dbReference type="Rhea" id="RHEA:23920"/>
        <dbReference type="ChEBI" id="CHEBI:29806"/>
        <dbReference type="ChEBI" id="CHEBI:58443"/>
        <dbReference type="ChEBI" id="CHEBI:58475"/>
        <dbReference type="EC" id="4.3.2.2"/>
    </reaction>
    <physiologicalReaction direction="left-to-right" evidence="2">
        <dbReference type="Rhea" id="RHEA:23921"/>
    </physiologicalReaction>
</comment>
<comment type="pathway">
    <text>Purine metabolism; AMP biosynthesis via de novo pathway; AMP from IMP: step 2/2.</text>
</comment>
<comment type="pathway">
    <text>Purine metabolism; IMP biosynthesis via de novo pathway; 5-amino-1-(5-phospho-D-ribosyl)imidazole-4-carboxamide from 5-amino-1-(5-phospho-D-ribosyl)imidazole-4-carboxylate: step 2/2.</text>
</comment>
<comment type="subunit">
    <text evidence="1">Homooligomer. Residues from neighboring subunits contribute catalytic and substrate-binding residues to each active site (By similarity).</text>
</comment>
<comment type="similarity">
    <text evidence="3">Belongs to the lyase 1 family. Adenylosuccinate lyase subfamily.</text>
</comment>
<name>PUR8_AQUAE</name>
<sequence>MIERYTRKEMGDVWSEVNKFKKWLDVEIAVCRAWAKLGKIPRDALKKIEEKTYVDKKVVEKIKEKEKVFKHDVLAFVSVIAEQVGEEGRYIHMGLTSSDVVDTALALLIREAIDIILKDIDKVMEEIKRLAFEHKDTLMMGRTHGVHAEPYTFGLKMCVWYDEMRRQKERLLFARENVLYGKISGAVGTYSNIPPEVEKLALEELGLKIEPASTQIVHRDRHAQLLTTLGLIASSLEKFATEIRHLQRTEVLEVLEPFTKGQRGSSAMPHKKNPIHSERICGLARVIRANSIPAMEDVVLWHERDISHSSVERVILPDSFIALDYILNLFYEILKGLVVNKERMRKNMELSKGLYASSKILVLLTQKGLSRDYAYDIVQRCAMKAWESDKTFKETLLEDPEVTKYLTEEEIEKALDPWEFLKNRDYVYEKVFGDEMG</sequence>
<organism>
    <name type="scientific">Aquifex aeolicus (strain VF5)</name>
    <dbReference type="NCBI Taxonomy" id="224324"/>
    <lineage>
        <taxon>Bacteria</taxon>
        <taxon>Pseudomonadati</taxon>
        <taxon>Aquificota</taxon>
        <taxon>Aquificia</taxon>
        <taxon>Aquificales</taxon>
        <taxon>Aquificaceae</taxon>
        <taxon>Aquifex</taxon>
    </lineage>
</organism>
<evidence type="ECO:0000250" key="1"/>
<evidence type="ECO:0000250" key="2">
    <source>
        <dbReference type="UniProtKB" id="P0AB89"/>
    </source>
</evidence>
<evidence type="ECO:0000305" key="3"/>
<protein>
    <recommendedName>
        <fullName>Adenylosuccinate lyase</fullName>
        <shortName>ASL</shortName>
        <ecNumber evidence="2">4.3.2.2</ecNumber>
    </recommendedName>
    <alternativeName>
        <fullName>Adenylosuccinase</fullName>
        <shortName>ASase</shortName>
    </alternativeName>
</protein>
<feature type="chain" id="PRO_0000137872" description="Adenylosuccinate lyase">
    <location>
        <begin position="1"/>
        <end position="437"/>
    </location>
</feature>
<feature type="active site" description="Proton donor/acceptor" evidence="2">
    <location>
        <position position="144"/>
    </location>
</feature>
<feature type="active site" description="Proton donor/acceptor" evidence="2">
    <location>
        <position position="265"/>
    </location>
</feature>
<feature type="binding site" evidence="2">
    <location>
        <begin position="4"/>
        <end position="5"/>
    </location>
    <ligand>
        <name>N(6)-(1,2-dicarboxyethyl)-AMP</name>
        <dbReference type="ChEBI" id="CHEBI:57567"/>
    </ligand>
</feature>
<feature type="binding site" evidence="2">
    <location>
        <begin position="70"/>
        <end position="72"/>
    </location>
    <ligand>
        <name>N(6)-(1,2-dicarboxyethyl)-AMP</name>
        <dbReference type="ChEBI" id="CHEBI:57567"/>
    </ligand>
</feature>
<feature type="binding site" evidence="2">
    <location>
        <begin position="96"/>
        <end position="97"/>
    </location>
    <ligand>
        <name>N(6)-(1,2-dicarboxyethyl)-AMP</name>
        <dbReference type="ChEBI" id="CHEBI:57567"/>
    </ligand>
</feature>
<feature type="binding site" evidence="2">
    <location>
        <position position="215"/>
    </location>
    <ligand>
        <name>N(6)-(1,2-dicarboxyethyl)-AMP</name>
        <dbReference type="ChEBI" id="CHEBI:57567"/>
    </ligand>
</feature>
<feature type="binding site" evidence="2">
    <location>
        <position position="266"/>
    </location>
    <ligand>
        <name>N(6)-(1,2-dicarboxyethyl)-AMP</name>
        <dbReference type="ChEBI" id="CHEBI:57567"/>
    </ligand>
</feature>
<feature type="binding site" evidence="2">
    <location>
        <begin position="271"/>
        <end position="273"/>
    </location>
    <ligand>
        <name>N(6)-(1,2-dicarboxyethyl)-AMP</name>
        <dbReference type="ChEBI" id="CHEBI:57567"/>
    </ligand>
</feature>
<feature type="binding site" evidence="2">
    <location>
        <begin position="310"/>
        <end position="314"/>
    </location>
    <ligand>
        <name>N(6)-(1,2-dicarboxyethyl)-AMP</name>
        <dbReference type="ChEBI" id="CHEBI:57567"/>
    </ligand>
</feature>